<name>DNLJ_ONYPE</name>
<evidence type="ECO:0000255" key="1">
    <source>
        <dbReference type="HAMAP-Rule" id="MF_01588"/>
    </source>
</evidence>
<feature type="chain" id="PRO_0000313349" description="DNA ligase">
    <location>
        <begin position="1"/>
        <end position="671"/>
    </location>
</feature>
<feature type="domain" description="BRCT" evidence="1">
    <location>
        <begin position="588"/>
        <end position="671"/>
    </location>
</feature>
<feature type="active site" description="N6-AMP-lysine intermediate" evidence="1">
    <location>
        <position position="115"/>
    </location>
</feature>
<feature type="binding site" evidence="1">
    <location>
        <begin position="35"/>
        <end position="39"/>
    </location>
    <ligand>
        <name>NAD(+)</name>
        <dbReference type="ChEBI" id="CHEBI:57540"/>
    </ligand>
</feature>
<feature type="binding site" evidence="1">
    <location>
        <begin position="84"/>
        <end position="85"/>
    </location>
    <ligand>
        <name>NAD(+)</name>
        <dbReference type="ChEBI" id="CHEBI:57540"/>
    </ligand>
</feature>
<feature type="binding site" evidence="1">
    <location>
        <position position="113"/>
    </location>
    <ligand>
        <name>NAD(+)</name>
        <dbReference type="ChEBI" id="CHEBI:57540"/>
    </ligand>
</feature>
<feature type="binding site" evidence="1">
    <location>
        <position position="136"/>
    </location>
    <ligand>
        <name>NAD(+)</name>
        <dbReference type="ChEBI" id="CHEBI:57540"/>
    </ligand>
</feature>
<feature type="binding site" evidence="1">
    <location>
        <position position="170"/>
    </location>
    <ligand>
        <name>NAD(+)</name>
        <dbReference type="ChEBI" id="CHEBI:57540"/>
    </ligand>
</feature>
<feature type="binding site" evidence="1">
    <location>
        <position position="285"/>
    </location>
    <ligand>
        <name>NAD(+)</name>
        <dbReference type="ChEBI" id="CHEBI:57540"/>
    </ligand>
</feature>
<feature type="binding site" evidence="1">
    <location>
        <position position="309"/>
    </location>
    <ligand>
        <name>NAD(+)</name>
        <dbReference type="ChEBI" id="CHEBI:57540"/>
    </ligand>
</feature>
<feature type="binding site" evidence="1">
    <location>
        <position position="403"/>
    </location>
    <ligand>
        <name>Zn(2+)</name>
        <dbReference type="ChEBI" id="CHEBI:29105"/>
    </ligand>
</feature>
<feature type="binding site" evidence="1">
    <location>
        <position position="406"/>
    </location>
    <ligand>
        <name>Zn(2+)</name>
        <dbReference type="ChEBI" id="CHEBI:29105"/>
    </ligand>
</feature>
<feature type="binding site" evidence="1">
    <location>
        <position position="421"/>
    </location>
    <ligand>
        <name>Zn(2+)</name>
        <dbReference type="ChEBI" id="CHEBI:29105"/>
    </ligand>
</feature>
<feature type="binding site" evidence="1">
    <location>
        <position position="426"/>
    </location>
    <ligand>
        <name>Zn(2+)</name>
        <dbReference type="ChEBI" id="CHEBI:29105"/>
    </ligand>
</feature>
<comment type="function">
    <text evidence="1">DNA ligase that catalyzes the formation of phosphodiester linkages between 5'-phosphoryl and 3'-hydroxyl groups in double-stranded DNA using NAD as a coenzyme and as the energy source for the reaction. It is essential for DNA replication and repair of damaged DNA.</text>
</comment>
<comment type="catalytic activity">
    <reaction evidence="1">
        <text>NAD(+) + (deoxyribonucleotide)n-3'-hydroxyl + 5'-phospho-(deoxyribonucleotide)m = (deoxyribonucleotide)n+m + AMP + beta-nicotinamide D-nucleotide.</text>
        <dbReference type="EC" id="6.5.1.2"/>
    </reaction>
</comment>
<comment type="cofactor">
    <cofactor evidence="1">
        <name>Mg(2+)</name>
        <dbReference type="ChEBI" id="CHEBI:18420"/>
    </cofactor>
    <cofactor evidence="1">
        <name>Mn(2+)</name>
        <dbReference type="ChEBI" id="CHEBI:29035"/>
    </cofactor>
</comment>
<comment type="similarity">
    <text evidence="1">Belongs to the NAD-dependent DNA ligase family. LigA subfamily.</text>
</comment>
<accession>Q6YQD6</accession>
<keyword id="KW-0227">DNA damage</keyword>
<keyword id="KW-0234">DNA repair</keyword>
<keyword id="KW-0235">DNA replication</keyword>
<keyword id="KW-0436">Ligase</keyword>
<keyword id="KW-0460">Magnesium</keyword>
<keyword id="KW-0464">Manganese</keyword>
<keyword id="KW-0479">Metal-binding</keyword>
<keyword id="KW-0520">NAD</keyword>
<keyword id="KW-0862">Zinc</keyword>
<dbReference type="EC" id="6.5.1.2" evidence="1"/>
<dbReference type="EMBL" id="AP006628">
    <property type="protein sequence ID" value="BAD04523.1"/>
    <property type="molecule type" value="Genomic_DNA"/>
</dbReference>
<dbReference type="SMR" id="Q6YQD6"/>
<dbReference type="STRING" id="262768.PAM_438"/>
<dbReference type="KEGG" id="poy:PAM_438"/>
<dbReference type="eggNOG" id="COG0272">
    <property type="taxonomic scope" value="Bacteria"/>
</dbReference>
<dbReference type="HOGENOM" id="CLU_007764_2_1_14"/>
<dbReference type="BioCyc" id="OYEL262768:G1G26-518-MONOMER"/>
<dbReference type="Proteomes" id="UP000002523">
    <property type="component" value="Chromosome"/>
</dbReference>
<dbReference type="GO" id="GO:0005829">
    <property type="term" value="C:cytosol"/>
    <property type="evidence" value="ECO:0007669"/>
    <property type="project" value="TreeGrafter"/>
</dbReference>
<dbReference type="GO" id="GO:0003677">
    <property type="term" value="F:DNA binding"/>
    <property type="evidence" value="ECO:0007669"/>
    <property type="project" value="InterPro"/>
</dbReference>
<dbReference type="GO" id="GO:0003911">
    <property type="term" value="F:DNA ligase (NAD+) activity"/>
    <property type="evidence" value="ECO:0007669"/>
    <property type="project" value="UniProtKB-UniRule"/>
</dbReference>
<dbReference type="GO" id="GO:0046872">
    <property type="term" value="F:metal ion binding"/>
    <property type="evidence" value="ECO:0007669"/>
    <property type="project" value="UniProtKB-KW"/>
</dbReference>
<dbReference type="GO" id="GO:0006281">
    <property type="term" value="P:DNA repair"/>
    <property type="evidence" value="ECO:0007669"/>
    <property type="project" value="UniProtKB-KW"/>
</dbReference>
<dbReference type="GO" id="GO:0006260">
    <property type="term" value="P:DNA replication"/>
    <property type="evidence" value="ECO:0007669"/>
    <property type="project" value="UniProtKB-KW"/>
</dbReference>
<dbReference type="CDD" id="cd17748">
    <property type="entry name" value="BRCT_DNA_ligase_like"/>
    <property type="match status" value="1"/>
</dbReference>
<dbReference type="CDD" id="cd00114">
    <property type="entry name" value="LIGANc"/>
    <property type="match status" value="1"/>
</dbReference>
<dbReference type="FunFam" id="1.10.150.20:FF:000006">
    <property type="entry name" value="DNA ligase"/>
    <property type="match status" value="1"/>
</dbReference>
<dbReference type="FunFam" id="1.10.150.20:FF:000007">
    <property type="entry name" value="DNA ligase"/>
    <property type="match status" value="1"/>
</dbReference>
<dbReference type="Gene3D" id="6.20.10.30">
    <property type="match status" value="1"/>
</dbReference>
<dbReference type="Gene3D" id="1.10.150.20">
    <property type="entry name" value="5' to 3' exonuclease, C-terminal subdomain"/>
    <property type="match status" value="2"/>
</dbReference>
<dbReference type="Gene3D" id="3.40.50.10190">
    <property type="entry name" value="BRCT domain"/>
    <property type="match status" value="1"/>
</dbReference>
<dbReference type="Gene3D" id="3.30.470.30">
    <property type="entry name" value="DNA ligase/mRNA capping enzyme"/>
    <property type="match status" value="1"/>
</dbReference>
<dbReference type="Gene3D" id="1.10.287.610">
    <property type="entry name" value="Helix hairpin bin"/>
    <property type="match status" value="1"/>
</dbReference>
<dbReference type="Gene3D" id="2.40.50.140">
    <property type="entry name" value="Nucleic acid-binding proteins"/>
    <property type="match status" value="1"/>
</dbReference>
<dbReference type="HAMAP" id="MF_01588">
    <property type="entry name" value="DNA_ligase_A"/>
    <property type="match status" value="1"/>
</dbReference>
<dbReference type="InterPro" id="IPR001357">
    <property type="entry name" value="BRCT_dom"/>
</dbReference>
<dbReference type="InterPro" id="IPR036420">
    <property type="entry name" value="BRCT_dom_sf"/>
</dbReference>
<dbReference type="InterPro" id="IPR041663">
    <property type="entry name" value="DisA/LigA_HHH"/>
</dbReference>
<dbReference type="InterPro" id="IPR001679">
    <property type="entry name" value="DNA_ligase"/>
</dbReference>
<dbReference type="InterPro" id="IPR018239">
    <property type="entry name" value="DNA_ligase_AS"/>
</dbReference>
<dbReference type="InterPro" id="IPR013839">
    <property type="entry name" value="DNAligase_adenylation"/>
</dbReference>
<dbReference type="InterPro" id="IPR013840">
    <property type="entry name" value="DNAligase_N"/>
</dbReference>
<dbReference type="InterPro" id="IPR003583">
    <property type="entry name" value="Hlx-hairpin-Hlx_DNA-bd_motif"/>
</dbReference>
<dbReference type="InterPro" id="IPR012340">
    <property type="entry name" value="NA-bd_OB-fold"/>
</dbReference>
<dbReference type="InterPro" id="IPR004150">
    <property type="entry name" value="NAD_DNA_ligase_OB"/>
</dbReference>
<dbReference type="InterPro" id="IPR010994">
    <property type="entry name" value="RuvA_2-like"/>
</dbReference>
<dbReference type="InterPro" id="IPR004149">
    <property type="entry name" value="Znf_DNAligase_C4"/>
</dbReference>
<dbReference type="NCBIfam" id="TIGR00575">
    <property type="entry name" value="dnlj"/>
    <property type="match status" value="1"/>
</dbReference>
<dbReference type="NCBIfam" id="NF005932">
    <property type="entry name" value="PRK07956.1"/>
    <property type="match status" value="1"/>
</dbReference>
<dbReference type="PANTHER" id="PTHR23389">
    <property type="entry name" value="CHROMOSOME TRANSMISSION FIDELITY FACTOR 18"/>
    <property type="match status" value="1"/>
</dbReference>
<dbReference type="PANTHER" id="PTHR23389:SF9">
    <property type="entry name" value="DNA LIGASE"/>
    <property type="match status" value="1"/>
</dbReference>
<dbReference type="Pfam" id="PF00533">
    <property type="entry name" value="BRCT"/>
    <property type="match status" value="1"/>
</dbReference>
<dbReference type="Pfam" id="PF01653">
    <property type="entry name" value="DNA_ligase_aden"/>
    <property type="match status" value="1"/>
</dbReference>
<dbReference type="Pfam" id="PF03120">
    <property type="entry name" value="DNA_ligase_OB"/>
    <property type="match status" value="1"/>
</dbReference>
<dbReference type="Pfam" id="PF03119">
    <property type="entry name" value="DNA_ligase_ZBD"/>
    <property type="match status" value="1"/>
</dbReference>
<dbReference type="Pfam" id="PF12826">
    <property type="entry name" value="HHH_2"/>
    <property type="match status" value="1"/>
</dbReference>
<dbReference type="Pfam" id="PF22745">
    <property type="entry name" value="Nlig-Ia"/>
    <property type="match status" value="1"/>
</dbReference>
<dbReference type="PIRSF" id="PIRSF001604">
    <property type="entry name" value="LigA"/>
    <property type="match status" value="1"/>
</dbReference>
<dbReference type="SMART" id="SM00292">
    <property type="entry name" value="BRCT"/>
    <property type="match status" value="1"/>
</dbReference>
<dbReference type="SMART" id="SM00278">
    <property type="entry name" value="HhH1"/>
    <property type="match status" value="3"/>
</dbReference>
<dbReference type="SMART" id="SM00532">
    <property type="entry name" value="LIGANc"/>
    <property type="match status" value="1"/>
</dbReference>
<dbReference type="SUPFAM" id="SSF52113">
    <property type="entry name" value="BRCT domain"/>
    <property type="match status" value="1"/>
</dbReference>
<dbReference type="SUPFAM" id="SSF56091">
    <property type="entry name" value="DNA ligase/mRNA capping enzyme, catalytic domain"/>
    <property type="match status" value="1"/>
</dbReference>
<dbReference type="SUPFAM" id="SSF50249">
    <property type="entry name" value="Nucleic acid-binding proteins"/>
    <property type="match status" value="1"/>
</dbReference>
<dbReference type="SUPFAM" id="SSF47781">
    <property type="entry name" value="RuvA domain 2-like"/>
    <property type="match status" value="1"/>
</dbReference>
<dbReference type="PROSITE" id="PS50172">
    <property type="entry name" value="BRCT"/>
    <property type="match status" value="1"/>
</dbReference>
<dbReference type="PROSITE" id="PS01055">
    <property type="entry name" value="DNA_LIGASE_N1"/>
    <property type="match status" value="1"/>
</dbReference>
<sequence>MQNFDLIKQKIKSLVKQLTKANYQYYNLSNPDLSDQQYDALLKELINLETRYPQFKLPYSPTLKIGGFVEKKFSTIKHKTPMMSLGNVFNLEEIKAFYDRIVKKIPTFSLLTELKIDGVAISLKYQKGILVQALTRGNGIWGEDITKNAQTIKTIPLRLKEDLDLEVRGEIYLSHPAFEKLNAQRKQENKPLFSNPRNAASGTLRQLNSAIVAQRNLSIFVYGISDPYLTKPTQKETLVFLTALGFTTNPHYYCVSNFENLLSVIEKYKTIKEQLTYDTDGIVIKINELAFHSLIGATAKAPRWATAYKFATITSQSIVQNIIFQVGRTGVITPVCKIMPVMVDGSLVSKVVLHNYDYICKKDIRIKDHVIVHKAGSVIPEILEVIKSKRTDLQKPTLMIEKCPACQTILEKQPGEVDYFCLNPNCREQKIQKLIHFVSKNAMDINVLGEQTIIAFFDKNLIAKPSDLYLLKKHKHILQEMPGFGAKKITNILDAIEASKQKGFEDVLFALGIKHIGKKVSQVLAKHFQTIENLQQATPELITQIREIGIKIAQSIQQYFSNSCNLEEVSKLKTLGVSFQSTNPQNPTTQTIFTNKKIVLTGTLQKYSRLQIQQILEQMGAIITNSLSLQNNYLIVGINAGSKLTKAQKLQIPIIEEKELQQIIENSQIKL</sequence>
<organism>
    <name type="scientific">Onion yellows phytoplasma (strain OY-M)</name>
    <dbReference type="NCBI Taxonomy" id="262768"/>
    <lineage>
        <taxon>Bacteria</taxon>
        <taxon>Bacillati</taxon>
        <taxon>Mycoplasmatota</taxon>
        <taxon>Mollicutes</taxon>
        <taxon>Acholeplasmatales</taxon>
        <taxon>Acholeplasmataceae</taxon>
        <taxon>Candidatus Phytoplasma</taxon>
        <taxon>16SrI (Aster yellows group)</taxon>
    </lineage>
</organism>
<proteinExistence type="inferred from homology"/>
<protein>
    <recommendedName>
        <fullName evidence="1">DNA ligase</fullName>
        <ecNumber evidence="1">6.5.1.2</ecNumber>
    </recommendedName>
    <alternativeName>
        <fullName evidence="1">Polydeoxyribonucleotide synthase [NAD(+)]</fullName>
    </alternativeName>
</protein>
<gene>
    <name evidence="1" type="primary">ligA</name>
    <name type="ordered locus">PAM_438</name>
</gene>
<reference key="1">
    <citation type="journal article" date="2004" name="Nat. Genet.">
        <title>Reductive evolution suggested from the complete genome sequence of a plant-pathogenic phytoplasma.</title>
        <authorList>
            <person name="Oshima K."/>
            <person name="Kakizawa S."/>
            <person name="Nishigawa H."/>
            <person name="Jung H.-Y."/>
            <person name="Wei W."/>
            <person name="Suzuki S."/>
            <person name="Arashida R."/>
            <person name="Nakata D."/>
            <person name="Miyata S."/>
            <person name="Ugaki M."/>
            <person name="Namba S."/>
        </authorList>
    </citation>
    <scope>NUCLEOTIDE SEQUENCE [LARGE SCALE GENOMIC DNA]</scope>
    <source>
        <strain>OY-M</strain>
    </source>
</reference>